<keyword id="KW-0068">Autocatalytic cleavage</keyword>
<keyword id="KW-0963">Cytoplasm</keyword>
<keyword id="KW-0378">Hydrolase</keyword>
<keyword id="KW-0645">Protease</keyword>
<keyword id="KW-0647">Proteasome</keyword>
<keyword id="KW-1185">Reference proteome</keyword>
<keyword id="KW-0888">Threonine protease</keyword>
<keyword id="KW-0865">Zymogen</keyword>
<gene>
    <name evidence="1" type="primary">prcB</name>
    <name type="ordered locus">ML1322</name>
</gene>
<organism>
    <name type="scientific">Mycobacterium leprae (strain TN)</name>
    <dbReference type="NCBI Taxonomy" id="272631"/>
    <lineage>
        <taxon>Bacteria</taxon>
        <taxon>Bacillati</taxon>
        <taxon>Actinomycetota</taxon>
        <taxon>Actinomycetes</taxon>
        <taxon>Mycobacteriales</taxon>
        <taxon>Mycobacteriaceae</taxon>
        <taxon>Mycobacterium</taxon>
    </lineage>
</organism>
<reference key="1">
    <citation type="journal article" date="2001" name="Nature">
        <title>Massive gene decay in the leprosy bacillus.</title>
        <authorList>
            <person name="Cole S.T."/>
            <person name="Eiglmeier K."/>
            <person name="Parkhill J."/>
            <person name="James K.D."/>
            <person name="Thomson N.R."/>
            <person name="Wheeler P.R."/>
            <person name="Honore N."/>
            <person name="Garnier T."/>
            <person name="Churcher C.M."/>
            <person name="Harris D.E."/>
            <person name="Mungall K.L."/>
            <person name="Basham D."/>
            <person name="Brown D."/>
            <person name="Chillingworth T."/>
            <person name="Connor R."/>
            <person name="Davies R.M."/>
            <person name="Devlin K."/>
            <person name="Duthoy S."/>
            <person name="Feltwell T."/>
            <person name="Fraser A."/>
            <person name="Hamlin N."/>
            <person name="Holroyd S."/>
            <person name="Hornsby T."/>
            <person name="Jagels K."/>
            <person name="Lacroix C."/>
            <person name="Maclean J."/>
            <person name="Moule S."/>
            <person name="Murphy L.D."/>
            <person name="Oliver K."/>
            <person name="Quail M.A."/>
            <person name="Rajandream M.A."/>
            <person name="Rutherford K.M."/>
            <person name="Rutter S."/>
            <person name="Seeger K."/>
            <person name="Simon S."/>
            <person name="Simmonds M."/>
            <person name="Skelton J."/>
            <person name="Squares R."/>
            <person name="Squares S."/>
            <person name="Stevens K."/>
            <person name="Taylor K."/>
            <person name="Whitehead S."/>
            <person name="Woodward J.R."/>
            <person name="Barrell B.G."/>
        </authorList>
    </citation>
    <scope>NUCLEOTIDE SEQUENCE [LARGE SCALE GENOMIC DNA]</scope>
    <source>
        <strain>TN</strain>
    </source>
</reference>
<accession>Q49780</accession>
<dbReference type="EC" id="3.4.25.1" evidence="1"/>
<dbReference type="EMBL" id="U00017">
    <property type="protein sequence ID" value="AAA17188.1"/>
    <property type="molecule type" value="Genomic_DNA"/>
</dbReference>
<dbReference type="EMBL" id="AL035310">
    <property type="protein sequence ID" value="CAA22933.1"/>
    <property type="molecule type" value="Genomic_DNA"/>
</dbReference>
<dbReference type="EMBL" id="AL583921">
    <property type="protein sequence ID" value="CAC31703.1"/>
    <property type="molecule type" value="Genomic_DNA"/>
</dbReference>
<dbReference type="PIR" id="S72848">
    <property type="entry name" value="S72848"/>
</dbReference>
<dbReference type="RefSeq" id="NP_301950.1">
    <property type="nucleotide sequence ID" value="NC_002677.1"/>
</dbReference>
<dbReference type="RefSeq" id="WP_010908271.1">
    <property type="nucleotide sequence ID" value="NC_002677.1"/>
</dbReference>
<dbReference type="SMR" id="Q49780"/>
<dbReference type="STRING" id="272631.gene:17575156"/>
<dbReference type="MEROPS" id="T01.005"/>
<dbReference type="KEGG" id="mle:ML1322"/>
<dbReference type="PATRIC" id="fig|272631.5.peg.2439"/>
<dbReference type="Leproma" id="ML1322"/>
<dbReference type="eggNOG" id="COG0638">
    <property type="taxonomic scope" value="Bacteria"/>
</dbReference>
<dbReference type="HOGENOM" id="CLU_035750_2_0_11"/>
<dbReference type="OrthoDB" id="5174038at2"/>
<dbReference type="UniPathway" id="UPA00997"/>
<dbReference type="Proteomes" id="UP000000806">
    <property type="component" value="Chromosome"/>
</dbReference>
<dbReference type="GO" id="GO:0005737">
    <property type="term" value="C:cytoplasm"/>
    <property type="evidence" value="ECO:0007669"/>
    <property type="project" value="UniProtKB-SubCell"/>
</dbReference>
<dbReference type="GO" id="GO:0019774">
    <property type="term" value="C:proteasome core complex, beta-subunit complex"/>
    <property type="evidence" value="ECO:0007669"/>
    <property type="project" value="UniProtKB-UniRule"/>
</dbReference>
<dbReference type="GO" id="GO:0004298">
    <property type="term" value="F:threonine-type endopeptidase activity"/>
    <property type="evidence" value="ECO:0007669"/>
    <property type="project" value="UniProtKB-UniRule"/>
</dbReference>
<dbReference type="GO" id="GO:0019941">
    <property type="term" value="P:modification-dependent protein catabolic process"/>
    <property type="evidence" value="ECO:0007669"/>
    <property type="project" value="UniProtKB-UniRule"/>
</dbReference>
<dbReference type="GO" id="GO:0010498">
    <property type="term" value="P:proteasomal protein catabolic process"/>
    <property type="evidence" value="ECO:0007669"/>
    <property type="project" value="UniProtKB-UniRule"/>
</dbReference>
<dbReference type="CDD" id="cd01906">
    <property type="entry name" value="proteasome_protease_HslV"/>
    <property type="match status" value="1"/>
</dbReference>
<dbReference type="FunFam" id="3.60.20.10:FF:000046">
    <property type="entry name" value="Proteasome subunit beta"/>
    <property type="match status" value="1"/>
</dbReference>
<dbReference type="Gene3D" id="3.60.20.10">
    <property type="entry name" value="Glutamine Phosphoribosylpyrophosphate, subunit 1, domain 1"/>
    <property type="match status" value="1"/>
</dbReference>
<dbReference type="HAMAP" id="MF_02113_B">
    <property type="entry name" value="Proteasome_B_B"/>
    <property type="match status" value="1"/>
</dbReference>
<dbReference type="InterPro" id="IPR029055">
    <property type="entry name" value="Ntn_hydrolases_N"/>
</dbReference>
<dbReference type="InterPro" id="IPR001353">
    <property type="entry name" value="Proteasome_sua/b"/>
</dbReference>
<dbReference type="InterPro" id="IPR023333">
    <property type="entry name" value="Proteasome_suB-type"/>
</dbReference>
<dbReference type="InterPro" id="IPR022483">
    <property type="entry name" value="PSB_actinobac"/>
</dbReference>
<dbReference type="NCBIfam" id="TIGR03690">
    <property type="entry name" value="20S_bact_beta"/>
    <property type="match status" value="1"/>
</dbReference>
<dbReference type="PANTHER" id="PTHR32194:SF0">
    <property type="entry name" value="ATP-DEPENDENT PROTEASE SUBUNIT HSLV"/>
    <property type="match status" value="1"/>
</dbReference>
<dbReference type="PANTHER" id="PTHR32194">
    <property type="entry name" value="METALLOPROTEASE TLDD"/>
    <property type="match status" value="1"/>
</dbReference>
<dbReference type="Pfam" id="PF00227">
    <property type="entry name" value="Proteasome"/>
    <property type="match status" value="1"/>
</dbReference>
<dbReference type="SUPFAM" id="SSF56235">
    <property type="entry name" value="N-terminal nucleophile aminohydrolases (Ntn hydrolases)"/>
    <property type="match status" value="1"/>
</dbReference>
<dbReference type="PROSITE" id="PS51476">
    <property type="entry name" value="PROTEASOME_BETA_2"/>
    <property type="match status" value="1"/>
</dbReference>
<proteinExistence type="inferred from homology"/>
<feature type="propeptide" id="PRO_0000397532" description="Removed in mature form; by autocatalysis" evidence="1">
    <location>
        <begin position="1"/>
        <end position="56"/>
    </location>
</feature>
<feature type="chain" id="PRO_0000397533" description="Proteasome subunit beta">
    <location>
        <begin position="57"/>
        <end position="291"/>
    </location>
</feature>
<feature type="active site" description="Nucleophile" evidence="1">
    <location>
        <position position="57"/>
    </location>
</feature>
<sequence>MTRSFPDRLPTNLAFPGISVINQSSFVDLLRRQAPELLPVSLGGGQSGGGQQLSHGTTIVVLKYPGGVVIAGDRRSTQGNMIAGRDVRKVYITDDYTATGIAGIAAVAVEFARLYAVELEHYEKLEGVPLTFAGKVNRLAIMVRSNLTAAMQGLLALPLLAGYDIHAPDPQSAGRIVSFDAAGGWNIEEEGYQSVGSGSIFAKSSIKKLYSQVSDADSALRVAIEALYDAADDDSATGGPDLVRGIYPTAVTIGAEGAAEVTESRIAELAREIIESRSRAYTLGSFGGSEK</sequence>
<name>PSB_MYCLE</name>
<comment type="function">
    <text evidence="1">Component of the proteasome core, a large protease complex with broad specificity involved in protein degradation.</text>
</comment>
<comment type="catalytic activity">
    <reaction evidence="1">
        <text>Cleavage of peptide bonds with very broad specificity.</text>
        <dbReference type="EC" id="3.4.25.1"/>
    </reaction>
</comment>
<comment type="activity regulation">
    <text evidence="1">The formation of the proteasomal ATPase ARC-20S proteasome complex, likely via the docking of the C-termini of ARC into the intersubunit pockets in the alpha-rings, may trigger opening of the gate for substrate entry. Interconversion between the open-gate and close-gate conformations leads to a dynamic regulation of the 20S proteasome proteolysis activity.</text>
</comment>
<comment type="pathway">
    <text evidence="1">Protein degradation; proteasomal Pup-dependent pathway.</text>
</comment>
<comment type="subunit">
    <text evidence="1">The 20S proteasome core is composed of 14 alpha and 14 beta subunits that assemble into four stacked heptameric rings, resulting in a barrel-shaped structure. The two inner rings, each composed of seven catalytic beta subunits, are sandwiched by two outer rings, each composed of seven alpha subunits. The catalytic chamber with the active sites is on the inside of the barrel. Has a gated structure, the ends of the cylinder being occluded by the N-termini of the alpha-subunits. Is capped by the proteasome-associated ATPase, ARC.</text>
</comment>
<comment type="subcellular location">
    <subcellularLocation>
        <location evidence="1">Cytoplasm</location>
    </subcellularLocation>
</comment>
<comment type="similarity">
    <text evidence="1">Belongs to the peptidase T1B family.</text>
</comment>
<evidence type="ECO:0000255" key="1">
    <source>
        <dbReference type="HAMAP-Rule" id="MF_02113"/>
    </source>
</evidence>
<protein>
    <recommendedName>
        <fullName evidence="1">Proteasome subunit beta</fullName>
        <ecNumber evidence="1">3.4.25.1</ecNumber>
    </recommendedName>
    <alternativeName>
        <fullName evidence="1">20S proteasome beta subunit</fullName>
    </alternativeName>
    <alternativeName>
        <fullName evidence="1">Proteasome core protein PrcB</fullName>
    </alternativeName>
</protein>